<name>SCRY_SALTH</name>
<proteinExistence type="inferred from homology"/>
<comment type="function">
    <text>Porin for sucrose uptake.</text>
</comment>
<comment type="subunit">
    <text evidence="1">Homotrimer.</text>
</comment>
<comment type="subcellular location">
    <subcellularLocation>
        <location>Cell outer membrane</location>
        <topology>Multi-pass membrane protein</topology>
    </subcellularLocation>
</comment>
<comment type="domain">
    <text>The C-terminus helps to anchor the porin to the outer membrane.</text>
</comment>
<comment type="similarity">
    <text evidence="2">Belongs to the porin LamB (TC 1.B.3) family.</text>
</comment>
<reference key="1">
    <citation type="journal article" date="1991" name="J. Bacteriol.">
        <title>Characterization of the major promoter for the plasmid-encoded sucrose genes scrY, scrA, and scrB.</title>
        <authorList>
            <person name="Cowan P.J."/>
            <person name="Nagesha H."/>
            <person name="Leonard L."/>
            <person name="Howard J.L."/>
            <person name="Pittard A.J."/>
        </authorList>
    </citation>
    <scope>NUCLEOTIDE SEQUENCE [GENOMIC DNA]</scope>
</reference>
<keyword id="KW-0998">Cell outer membrane</keyword>
<keyword id="KW-0406">Ion transport</keyword>
<keyword id="KW-0472">Membrane</keyword>
<keyword id="KW-0614">Plasmid</keyword>
<keyword id="KW-0626">Porin</keyword>
<keyword id="KW-0732">Signal</keyword>
<keyword id="KW-0762">Sugar transport</keyword>
<keyword id="KW-0812">Transmembrane</keyword>
<keyword id="KW-1134">Transmembrane beta strand</keyword>
<keyword id="KW-0813">Transport</keyword>
<dbReference type="EMBL" id="M63038">
    <property type="protein sequence ID" value="AAA27218.1"/>
    <property type="molecule type" value="Genomic_DNA"/>
</dbReference>
<dbReference type="PIR" id="B41655">
    <property type="entry name" value="B41655"/>
</dbReference>
<dbReference type="SMR" id="P24262"/>
<dbReference type="GO" id="GO:0009279">
    <property type="term" value="C:cell outer membrane"/>
    <property type="evidence" value="ECO:0007669"/>
    <property type="project" value="UniProtKB-SubCell"/>
</dbReference>
<dbReference type="GO" id="GO:0046930">
    <property type="term" value="C:pore complex"/>
    <property type="evidence" value="ECO:0007669"/>
    <property type="project" value="UniProtKB-KW"/>
</dbReference>
<dbReference type="GO" id="GO:0015288">
    <property type="term" value="F:porin activity"/>
    <property type="evidence" value="ECO:0007669"/>
    <property type="project" value="UniProtKB-KW"/>
</dbReference>
<dbReference type="GO" id="GO:0006811">
    <property type="term" value="P:monoatomic ion transport"/>
    <property type="evidence" value="ECO:0007669"/>
    <property type="project" value="UniProtKB-KW"/>
</dbReference>
<dbReference type="InterPro" id="IPR021570">
    <property type="entry name" value="LamB-type_porin_N_dom"/>
</dbReference>
<dbReference type="Pfam" id="PF11471">
    <property type="entry name" value="Sugarporin_N"/>
    <property type="match status" value="1"/>
</dbReference>
<sequence length="41" mass="4502">MYRKSTLAMLIALLTSAASAHAQTDISTIEARLNALEKRLQ</sequence>
<accession>P24262</accession>
<feature type="signal peptide" evidence="1">
    <location>
        <begin position="1"/>
        <end position="22"/>
    </location>
</feature>
<feature type="chain" id="PRO_0000025186" description="Sucrose porin">
    <location>
        <begin position="23"/>
        <end position="41" status="greater than"/>
    </location>
</feature>
<feature type="non-terminal residue">
    <location>
        <position position="41"/>
    </location>
</feature>
<evidence type="ECO:0000250" key="1"/>
<evidence type="ECO:0000305" key="2"/>
<geneLocation type="plasmid">
    <name>Sac</name>
</geneLocation>
<protein>
    <recommendedName>
        <fullName>Sucrose porin</fullName>
    </recommendedName>
</protein>
<organism>
    <name type="scientific">Salmonella thompson</name>
    <dbReference type="NCBI Taxonomy" id="600"/>
    <lineage>
        <taxon>Bacteria</taxon>
        <taxon>Pseudomonadati</taxon>
        <taxon>Pseudomonadota</taxon>
        <taxon>Gammaproteobacteria</taxon>
        <taxon>Enterobacterales</taxon>
        <taxon>Enterobacteriaceae</taxon>
        <taxon>Salmonella</taxon>
    </lineage>
</organism>
<gene>
    <name type="primary">scrY</name>
</gene>